<dbReference type="EC" id="2.5.1.75" evidence="1"/>
<dbReference type="EMBL" id="CP000576">
    <property type="protein sequence ID" value="ABO18449.1"/>
    <property type="molecule type" value="Genomic_DNA"/>
</dbReference>
<dbReference type="RefSeq" id="WP_011863734.1">
    <property type="nucleotide sequence ID" value="NC_009091.1"/>
</dbReference>
<dbReference type="SMR" id="A3PFC4"/>
<dbReference type="STRING" id="167546.P9301_18261"/>
<dbReference type="KEGG" id="pmg:P9301_18261"/>
<dbReference type="eggNOG" id="COG0324">
    <property type="taxonomic scope" value="Bacteria"/>
</dbReference>
<dbReference type="HOGENOM" id="CLU_032616_0_1_3"/>
<dbReference type="OrthoDB" id="9776390at2"/>
<dbReference type="Proteomes" id="UP000001430">
    <property type="component" value="Chromosome"/>
</dbReference>
<dbReference type="GO" id="GO:0005524">
    <property type="term" value="F:ATP binding"/>
    <property type="evidence" value="ECO:0007669"/>
    <property type="project" value="UniProtKB-UniRule"/>
</dbReference>
<dbReference type="GO" id="GO:0052381">
    <property type="term" value="F:tRNA dimethylallyltransferase activity"/>
    <property type="evidence" value="ECO:0007669"/>
    <property type="project" value="UniProtKB-UniRule"/>
</dbReference>
<dbReference type="GO" id="GO:0006400">
    <property type="term" value="P:tRNA modification"/>
    <property type="evidence" value="ECO:0007669"/>
    <property type="project" value="TreeGrafter"/>
</dbReference>
<dbReference type="Gene3D" id="1.10.20.140">
    <property type="match status" value="1"/>
</dbReference>
<dbReference type="Gene3D" id="3.40.50.300">
    <property type="entry name" value="P-loop containing nucleotide triphosphate hydrolases"/>
    <property type="match status" value="1"/>
</dbReference>
<dbReference type="HAMAP" id="MF_00185">
    <property type="entry name" value="IPP_trans"/>
    <property type="match status" value="1"/>
</dbReference>
<dbReference type="InterPro" id="IPR039657">
    <property type="entry name" value="Dimethylallyltransferase"/>
</dbReference>
<dbReference type="InterPro" id="IPR018022">
    <property type="entry name" value="IPT"/>
</dbReference>
<dbReference type="InterPro" id="IPR027417">
    <property type="entry name" value="P-loop_NTPase"/>
</dbReference>
<dbReference type="NCBIfam" id="TIGR00174">
    <property type="entry name" value="miaA"/>
    <property type="match status" value="1"/>
</dbReference>
<dbReference type="PANTHER" id="PTHR11088">
    <property type="entry name" value="TRNA DIMETHYLALLYLTRANSFERASE"/>
    <property type="match status" value="1"/>
</dbReference>
<dbReference type="PANTHER" id="PTHR11088:SF60">
    <property type="entry name" value="TRNA DIMETHYLALLYLTRANSFERASE"/>
    <property type="match status" value="1"/>
</dbReference>
<dbReference type="Pfam" id="PF01715">
    <property type="entry name" value="IPPT"/>
    <property type="match status" value="1"/>
</dbReference>
<dbReference type="SUPFAM" id="SSF52540">
    <property type="entry name" value="P-loop containing nucleoside triphosphate hydrolases"/>
    <property type="match status" value="2"/>
</dbReference>
<gene>
    <name evidence="1" type="primary">miaA</name>
    <name type="ordered locus">P9301_18261</name>
</gene>
<organism>
    <name type="scientific">Prochlorococcus marinus (strain MIT 9301)</name>
    <dbReference type="NCBI Taxonomy" id="167546"/>
    <lineage>
        <taxon>Bacteria</taxon>
        <taxon>Bacillati</taxon>
        <taxon>Cyanobacteriota</taxon>
        <taxon>Cyanophyceae</taxon>
        <taxon>Synechococcales</taxon>
        <taxon>Prochlorococcaceae</taxon>
        <taxon>Prochlorococcus</taxon>
    </lineage>
</organism>
<name>MIAA_PROM0</name>
<protein>
    <recommendedName>
        <fullName evidence="1">tRNA dimethylallyltransferase</fullName>
        <ecNumber evidence="1">2.5.1.75</ecNumber>
    </recommendedName>
    <alternativeName>
        <fullName evidence="1">Dimethylallyl diphosphate:tRNA dimethylallyltransferase</fullName>
        <shortName evidence="1">DMAPP:tRNA dimethylallyltransferase</shortName>
        <shortName evidence="1">DMATase</shortName>
    </alternativeName>
    <alternativeName>
        <fullName evidence="1">Isopentenyl-diphosphate:tRNA isopentenyltransferase</fullName>
        <shortName evidence="1">IPP transferase</shortName>
        <shortName evidence="1">IPPT</shortName>
        <shortName evidence="1">IPTase</shortName>
    </alternativeName>
</protein>
<sequence length="299" mass="34373">MSSHPPHVIVLIGPTASGKTELAIEIAEYFKTNIHNIDSRQIYKSMDIGTAKPSKIQQKKIRHFLIDIEEPINPINVKQFQEIAQKSIKEEIKKDKLPFLVGGSGLYMNSITKGFFVPDVPPQNNLRKQLEELGQEKCWDLLENCDPLSTKKINFADHVRTIRALEVFYVTGKPLSTLKVQKPPNWKILELGLDRGNLKERIFQRTKNMFLSGIIDETNHLISKYGFDLPILETIGYREARNVLNNHSTIDKAIELTATKTIQFAKRQKTWFRNKNNPLWLNNKNPLKDAIIKIESFLS</sequence>
<comment type="function">
    <text evidence="1">Catalyzes the transfer of a dimethylallyl group onto the adenine at position 37 in tRNAs that read codons beginning with uridine, leading to the formation of N6-(dimethylallyl)adenosine (i(6)A).</text>
</comment>
<comment type="catalytic activity">
    <reaction evidence="1">
        <text>adenosine(37) in tRNA + dimethylallyl diphosphate = N(6)-dimethylallyladenosine(37) in tRNA + diphosphate</text>
        <dbReference type="Rhea" id="RHEA:26482"/>
        <dbReference type="Rhea" id="RHEA-COMP:10162"/>
        <dbReference type="Rhea" id="RHEA-COMP:10375"/>
        <dbReference type="ChEBI" id="CHEBI:33019"/>
        <dbReference type="ChEBI" id="CHEBI:57623"/>
        <dbReference type="ChEBI" id="CHEBI:74411"/>
        <dbReference type="ChEBI" id="CHEBI:74415"/>
        <dbReference type="EC" id="2.5.1.75"/>
    </reaction>
</comment>
<comment type="cofactor">
    <cofactor evidence="1">
        <name>Mg(2+)</name>
        <dbReference type="ChEBI" id="CHEBI:18420"/>
    </cofactor>
</comment>
<comment type="subunit">
    <text evidence="1">Monomer.</text>
</comment>
<comment type="similarity">
    <text evidence="1">Belongs to the IPP transferase family.</text>
</comment>
<reference key="1">
    <citation type="journal article" date="2007" name="PLoS Genet.">
        <title>Patterns and implications of gene gain and loss in the evolution of Prochlorococcus.</title>
        <authorList>
            <person name="Kettler G.C."/>
            <person name="Martiny A.C."/>
            <person name="Huang K."/>
            <person name="Zucker J."/>
            <person name="Coleman M.L."/>
            <person name="Rodrigue S."/>
            <person name="Chen F."/>
            <person name="Lapidus A."/>
            <person name="Ferriera S."/>
            <person name="Johnson J."/>
            <person name="Steglich C."/>
            <person name="Church G.M."/>
            <person name="Richardson P."/>
            <person name="Chisholm S.W."/>
        </authorList>
    </citation>
    <scope>NUCLEOTIDE SEQUENCE [LARGE SCALE GENOMIC DNA]</scope>
    <source>
        <strain>MIT 9301</strain>
    </source>
</reference>
<proteinExistence type="inferred from homology"/>
<feature type="chain" id="PRO_1000020632" description="tRNA dimethylallyltransferase">
    <location>
        <begin position="1"/>
        <end position="299"/>
    </location>
</feature>
<feature type="region of interest" description="Interaction with substrate tRNA" evidence="1">
    <location>
        <begin position="38"/>
        <end position="41"/>
    </location>
</feature>
<feature type="binding site" evidence="1">
    <location>
        <begin position="13"/>
        <end position="20"/>
    </location>
    <ligand>
        <name>ATP</name>
        <dbReference type="ChEBI" id="CHEBI:30616"/>
    </ligand>
</feature>
<feature type="binding site" evidence="1">
    <location>
        <begin position="15"/>
        <end position="20"/>
    </location>
    <ligand>
        <name>substrate</name>
    </ligand>
</feature>
<feature type="site" description="Interaction with substrate tRNA" evidence="1">
    <location>
        <position position="104"/>
    </location>
</feature>
<accession>A3PFC4</accession>
<keyword id="KW-0067">ATP-binding</keyword>
<keyword id="KW-0460">Magnesium</keyword>
<keyword id="KW-0547">Nucleotide-binding</keyword>
<keyword id="KW-1185">Reference proteome</keyword>
<keyword id="KW-0808">Transferase</keyword>
<keyword id="KW-0819">tRNA processing</keyword>
<evidence type="ECO:0000255" key="1">
    <source>
        <dbReference type="HAMAP-Rule" id="MF_00185"/>
    </source>
</evidence>